<dbReference type="EC" id="4.2.1.59" evidence="1"/>
<dbReference type="EMBL" id="CP000712">
    <property type="protein sequence ID" value="ABQ80299.1"/>
    <property type="molecule type" value="Genomic_DNA"/>
</dbReference>
<dbReference type="SMR" id="A5W839"/>
<dbReference type="KEGG" id="ppf:Pput_4175"/>
<dbReference type="eggNOG" id="COG0764">
    <property type="taxonomic scope" value="Bacteria"/>
</dbReference>
<dbReference type="HOGENOM" id="CLU_078912_1_0_6"/>
<dbReference type="GO" id="GO:0005737">
    <property type="term" value="C:cytoplasm"/>
    <property type="evidence" value="ECO:0007669"/>
    <property type="project" value="UniProtKB-SubCell"/>
</dbReference>
<dbReference type="GO" id="GO:0016020">
    <property type="term" value="C:membrane"/>
    <property type="evidence" value="ECO:0007669"/>
    <property type="project" value="GOC"/>
</dbReference>
<dbReference type="GO" id="GO:0019171">
    <property type="term" value="F:(3R)-hydroxyacyl-[acyl-carrier-protein] dehydratase activity"/>
    <property type="evidence" value="ECO:0007669"/>
    <property type="project" value="UniProtKB-EC"/>
</dbReference>
<dbReference type="GO" id="GO:0006633">
    <property type="term" value="P:fatty acid biosynthetic process"/>
    <property type="evidence" value="ECO:0007669"/>
    <property type="project" value="UniProtKB-UniRule"/>
</dbReference>
<dbReference type="GO" id="GO:0009245">
    <property type="term" value="P:lipid A biosynthetic process"/>
    <property type="evidence" value="ECO:0007669"/>
    <property type="project" value="UniProtKB-UniRule"/>
</dbReference>
<dbReference type="CDD" id="cd01288">
    <property type="entry name" value="FabZ"/>
    <property type="match status" value="1"/>
</dbReference>
<dbReference type="FunFam" id="3.10.129.10:FF:000001">
    <property type="entry name" value="3-hydroxyacyl-[acyl-carrier-protein] dehydratase FabZ"/>
    <property type="match status" value="1"/>
</dbReference>
<dbReference type="Gene3D" id="3.10.129.10">
    <property type="entry name" value="Hotdog Thioesterase"/>
    <property type="match status" value="1"/>
</dbReference>
<dbReference type="HAMAP" id="MF_00406">
    <property type="entry name" value="FabZ"/>
    <property type="match status" value="1"/>
</dbReference>
<dbReference type="InterPro" id="IPR013114">
    <property type="entry name" value="FabA_FabZ"/>
</dbReference>
<dbReference type="InterPro" id="IPR010084">
    <property type="entry name" value="FabZ"/>
</dbReference>
<dbReference type="InterPro" id="IPR029069">
    <property type="entry name" value="HotDog_dom_sf"/>
</dbReference>
<dbReference type="NCBIfam" id="TIGR01750">
    <property type="entry name" value="fabZ"/>
    <property type="match status" value="1"/>
</dbReference>
<dbReference type="NCBIfam" id="NF000582">
    <property type="entry name" value="PRK00006.1"/>
    <property type="match status" value="1"/>
</dbReference>
<dbReference type="PANTHER" id="PTHR30272">
    <property type="entry name" value="3-HYDROXYACYL-[ACYL-CARRIER-PROTEIN] DEHYDRATASE"/>
    <property type="match status" value="1"/>
</dbReference>
<dbReference type="PANTHER" id="PTHR30272:SF1">
    <property type="entry name" value="3-HYDROXYACYL-[ACYL-CARRIER-PROTEIN] DEHYDRATASE"/>
    <property type="match status" value="1"/>
</dbReference>
<dbReference type="Pfam" id="PF07977">
    <property type="entry name" value="FabA"/>
    <property type="match status" value="1"/>
</dbReference>
<dbReference type="SUPFAM" id="SSF54637">
    <property type="entry name" value="Thioesterase/thiol ester dehydrase-isomerase"/>
    <property type="match status" value="1"/>
</dbReference>
<keyword id="KW-0963">Cytoplasm</keyword>
<keyword id="KW-0441">Lipid A biosynthesis</keyword>
<keyword id="KW-0444">Lipid biosynthesis</keyword>
<keyword id="KW-0443">Lipid metabolism</keyword>
<keyword id="KW-0456">Lyase</keyword>
<evidence type="ECO:0000255" key="1">
    <source>
        <dbReference type="HAMAP-Rule" id="MF_00406"/>
    </source>
</evidence>
<accession>A5W839</accession>
<gene>
    <name evidence="1" type="primary">fabZ</name>
    <name type="ordered locus">Pput_4175</name>
</gene>
<comment type="function">
    <text evidence="1">Involved in unsaturated fatty acids biosynthesis. Catalyzes the dehydration of short chain beta-hydroxyacyl-ACPs and long chain saturated and unsaturated beta-hydroxyacyl-ACPs.</text>
</comment>
<comment type="catalytic activity">
    <reaction evidence="1">
        <text>a (3R)-hydroxyacyl-[ACP] = a (2E)-enoyl-[ACP] + H2O</text>
        <dbReference type="Rhea" id="RHEA:13097"/>
        <dbReference type="Rhea" id="RHEA-COMP:9925"/>
        <dbReference type="Rhea" id="RHEA-COMP:9945"/>
        <dbReference type="ChEBI" id="CHEBI:15377"/>
        <dbReference type="ChEBI" id="CHEBI:78784"/>
        <dbReference type="ChEBI" id="CHEBI:78827"/>
        <dbReference type="EC" id="4.2.1.59"/>
    </reaction>
</comment>
<comment type="subcellular location">
    <subcellularLocation>
        <location evidence="1">Cytoplasm</location>
    </subcellularLocation>
</comment>
<comment type="similarity">
    <text evidence="1">Belongs to the thioester dehydratase family. FabZ subfamily.</text>
</comment>
<organism>
    <name type="scientific">Pseudomonas putida (strain ATCC 700007 / DSM 6899 / JCM 31910 / BCRC 17059 / LMG 24140 / F1)</name>
    <dbReference type="NCBI Taxonomy" id="351746"/>
    <lineage>
        <taxon>Bacteria</taxon>
        <taxon>Pseudomonadati</taxon>
        <taxon>Pseudomonadota</taxon>
        <taxon>Gammaproteobacteria</taxon>
        <taxon>Pseudomonadales</taxon>
        <taxon>Pseudomonadaceae</taxon>
        <taxon>Pseudomonas</taxon>
    </lineage>
</organism>
<reference key="1">
    <citation type="submission" date="2007-05" db="EMBL/GenBank/DDBJ databases">
        <title>Complete sequence of Pseudomonas putida F1.</title>
        <authorList>
            <consortium name="US DOE Joint Genome Institute"/>
            <person name="Copeland A."/>
            <person name="Lucas S."/>
            <person name="Lapidus A."/>
            <person name="Barry K."/>
            <person name="Detter J.C."/>
            <person name="Glavina del Rio T."/>
            <person name="Hammon N."/>
            <person name="Israni S."/>
            <person name="Dalin E."/>
            <person name="Tice H."/>
            <person name="Pitluck S."/>
            <person name="Chain P."/>
            <person name="Malfatti S."/>
            <person name="Shin M."/>
            <person name="Vergez L."/>
            <person name="Schmutz J."/>
            <person name="Larimer F."/>
            <person name="Land M."/>
            <person name="Hauser L."/>
            <person name="Kyrpides N."/>
            <person name="Lykidis A."/>
            <person name="Parales R."/>
            <person name="Richardson P."/>
        </authorList>
    </citation>
    <scope>NUCLEOTIDE SEQUENCE [LARGE SCALE GENOMIC DNA]</scope>
    <source>
        <strain>ATCC 700007 / DSM 6899 / JCM 31910 / BCRC 17059 / LMG 24140 / F1</strain>
    </source>
</reference>
<name>FABZ_PSEP1</name>
<sequence>MMDINEIREYLPHRYPFLLVDRVTDLDFEAQSIRAYKNVSINEPFFNGHFPAHPIMPGVLIIEAMAQAAGILGFKMLDAKPADGTLYYFVGSDKLRFRQPVLPGDQLVLEAKFLSRKSMIWKFECRALVDGKPVCSAEITCAERSL</sequence>
<proteinExistence type="inferred from homology"/>
<feature type="chain" id="PRO_1000049854" description="3-hydroxyacyl-[acyl-carrier-protein] dehydratase FabZ">
    <location>
        <begin position="1"/>
        <end position="146"/>
    </location>
</feature>
<feature type="active site" evidence="1">
    <location>
        <position position="49"/>
    </location>
</feature>
<protein>
    <recommendedName>
        <fullName evidence="1">3-hydroxyacyl-[acyl-carrier-protein] dehydratase FabZ</fullName>
        <ecNumber evidence="1">4.2.1.59</ecNumber>
    </recommendedName>
    <alternativeName>
        <fullName evidence="1">(3R)-hydroxymyristoyl-[acyl-carrier-protein] dehydratase</fullName>
        <shortName evidence="1">(3R)-hydroxymyristoyl-ACP dehydrase</shortName>
    </alternativeName>
    <alternativeName>
        <fullName evidence="1">Beta-hydroxyacyl-ACP dehydratase</fullName>
    </alternativeName>
</protein>